<reference key="1">
    <citation type="journal article" date="2004" name="Nat. Genet.">
        <title>Complete sequencing and characterization of 21,243 full-length human cDNAs.</title>
        <authorList>
            <person name="Ota T."/>
            <person name="Suzuki Y."/>
            <person name="Nishikawa T."/>
            <person name="Otsuki T."/>
            <person name="Sugiyama T."/>
            <person name="Irie R."/>
            <person name="Wakamatsu A."/>
            <person name="Hayashi K."/>
            <person name="Sato H."/>
            <person name="Nagai K."/>
            <person name="Kimura K."/>
            <person name="Makita H."/>
            <person name="Sekine M."/>
            <person name="Obayashi M."/>
            <person name="Nishi T."/>
            <person name="Shibahara T."/>
            <person name="Tanaka T."/>
            <person name="Ishii S."/>
            <person name="Yamamoto J."/>
            <person name="Saito K."/>
            <person name="Kawai Y."/>
            <person name="Isono Y."/>
            <person name="Nakamura Y."/>
            <person name="Nagahari K."/>
            <person name="Murakami K."/>
            <person name="Yasuda T."/>
            <person name="Iwayanagi T."/>
            <person name="Wagatsuma M."/>
            <person name="Shiratori A."/>
            <person name="Sudo H."/>
            <person name="Hosoiri T."/>
            <person name="Kaku Y."/>
            <person name="Kodaira H."/>
            <person name="Kondo H."/>
            <person name="Sugawara M."/>
            <person name="Takahashi M."/>
            <person name="Kanda K."/>
            <person name="Yokoi T."/>
            <person name="Furuya T."/>
            <person name="Kikkawa E."/>
            <person name="Omura Y."/>
            <person name="Abe K."/>
            <person name="Kamihara K."/>
            <person name="Katsuta N."/>
            <person name="Sato K."/>
            <person name="Tanikawa M."/>
            <person name="Yamazaki M."/>
            <person name="Ninomiya K."/>
            <person name="Ishibashi T."/>
            <person name="Yamashita H."/>
            <person name="Murakawa K."/>
            <person name="Fujimori K."/>
            <person name="Tanai H."/>
            <person name="Kimata M."/>
            <person name="Watanabe M."/>
            <person name="Hiraoka S."/>
            <person name="Chiba Y."/>
            <person name="Ishida S."/>
            <person name="Ono Y."/>
            <person name="Takiguchi S."/>
            <person name="Watanabe S."/>
            <person name="Yosida M."/>
            <person name="Hotuta T."/>
            <person name="Kusano J."/>
            <person name="Kanehori K."/>
            <person name="Takahashi-Fujii A."/>
            <person name="Hara H."/>
            <person name="Tanase T.-O."/>
            <person name="Nomura Y."/>
            <person name="Togiya S."/>
            <person name="Komai F."/>
            <person name="Hara R."/>
            <person name="Takeuchi K."/>
            <person name="Arita M."/>
            <person name="Imose N."/>
            <person name="Musashino K."/>
            <person name="Yuuki H."/>
            <person name="Oshima A."/>
            <person name="Sasaki N."/>
            <person name="Aotsuka S."/>
            <person name="Yoshikawa Y."/>
            <person name="Matsunawa H."/>
            <person name="Ichihara T."/>
            <person name="Shiohata N."/>
            <person name="Sano S."/>
            <person name="Moriya S."/>
            <person name="Momiyama H."/>
            <person name="Satoh N."/>
            <person name="Takami S."/>
            <person name="Terashima Y."/>
            <person name="Suzuki O."/>
            <person name="Nakagawa S."/>
            <person name="Senoh A."/>
            <person name="Mizoguchi H."/>
            <person name="Goto Y."/>
            <person name="Shimizu F."/>
            <person name="Wakebe H."/>
            <person name="Hishigaki H."/>
            <person name="Watanabe T."/>
            <person name="Sugiyama A."/>
            <person name="Takemoto M."/>
            <person name="Kawakami B."/>
            <person name="Yamazaki M."/>
            <person name="Watanabe K."/>
            <person name="Kumagai A."/>
            <person name="Itakura S."/>
            <person name="Fukuzumi Y."/>
            <person name="Fujimori Y."/>
            <person name="Komiyama M."/>
            <person name="Tashiro H."/>
            <person name="Tanigami A."/>
            <person name="Fujiwara T."/>
            <person name="Ono T."/>
            <person name="Yamada K."/>
            <person name="Fujii Y."/>
            <person name="Ozaki K."/>
            <person name="Hirao M."/>
            <person name="Ohmori Y."/>
            <person name="Kawabata A."/>
            <person name="Hikiji T."/>
            <person name="Kobatake N."/>
            <person name="Inagaki H."/>
            <person name="Ikema Y."/>
            <person name="Okamoto S."/>
            <person name="Okitani R."/>
            <person name="Kawakami T."/>
            <person name="Noguchi S."/>
            <person name="Itoh T."/>
            <person name="Shigeta K."/>
            <person name="Senba T."/>
            <person name="Matsumura K."/>
            <person name="Nakajima Y."/>
            <person name="Mizuno T."/>
            <person name="Morinaga M."/>
            <person name="Sasaki M."/>
            <person name="Togashi T."/>
            <person name="Oyama M."/>
            <person name="Hata H."/>
            <person name="Watanabe M."/>
            <person name="Komatsu T."/>
            <person name="Mizushima-Sugano J."/>
            <person name="Satoh T."/>
            <person name="Shirai Y."/>
            <person name="Takahashi Y."/>
            <person name="Nakagawa K."/>
            <person name="Okumura K."/>
            <person name="Nagase T."/>
            <person name="Nomura N."/>
            <person name="Kikuchi H."/>
            <person name="Masuho Y."/>
            <person name="Yamashita R."/>
            <person name="Nakai K."/>
            <person name="Yada T."/>
            <person name="Nakamura Y."/>
            <person name="Ohara O."/>
            <person name="Isogai T."/>
            <person name="Sugano S."/>
        </authorList>
    </citation>
    <scope>NUCLEOTIDE SEQUENCE [LARGE SCALE MRNA] (ISOFORM 2)</scope>
    <source>
        <tissue>Cerebellum</tissue>
    </source>
</reference>
<reference key="2">
    <citation type="journal article" date="2007" name="BMC Genomics">
        <title>The full-ORF clone resource of the German cDNA consortium.</title>
        <authorList>
            <person name="Bechtel S."/>
            <person name="Rosenfelder H."/>
            <person name="Duda A."/>
            <person name="Schmidt C.P."/>
            <person name="Ernst U."/>
            <person name="Wellenreuther R."/>
            <person name="Mehrle A."/>
            <person name="Schuster C."/>
            <person name="Bahr A."/>
            <person name="Bloecker H."/>
            <person name="Heubner D."/>
            <person name="Hoerlein A."/>
            <person name="Michel G."/>
            <person name="Wedler H."/>
            <person name="Koehrer K."/>
            <person name="Ottenwaelder B."/>
            <person name="Poustka A."/>
            <person name="Wiemann S."/>
            <person name="Schupp I."/>
        </authorList>
    </citation>
    <scope>NUCLEOTIDE SEQUENCE [LARGE SCALE MRNA] (ISOFORM 3)</scope>
    <source>
        <tissue>Testis</tissue>
    </source>
</reference>
<reference key="3">
    <citation type="journal article" date="2004" name="Nature">
        <title>The DNA sequence and comparative analysis of human chromosome 5.</title>
        <authorList>
            <person name="Schmutz J."/>
            <person name="Martin J."/>
            <person name="Terry A."/>
            <person name="Couronne O."/>
            <person name="Grimwood J."/>
            <person name="Lowry S."/>
            <person name="Gordon L.A."/>
            <person name="Scott D."/>
            <person name="Xie G."/>
            <person name="Huang W."/>
            <person name="Hellsten U."/>
            <person name="Tran-Gyamfi M."/>
            <person name="She X."/>
            <person name="Prabhakar S."/>
            <person name="Aerts A."/>
            <person name="Altherr M."/>
            <person name="Bajorek E."/>
            <person name="Black S."/>
            <person name="Branscomb E."/>
            <person name="Caoile C."/>
            <person name="Challacombe J.F."/>
            <person name="Chan Y.M."/>
            <person name="Denys M."/>
            <person name="Detter J.C."/>
            <person name="Escobar J."/>
            <person name="Flowers D."/>
            <person name="Fotopulos D."/>
            <person name="Glavina T."/>
            <person name="Gomez M."/>
            <person name="Gonzales E."/>
            <person name="Goodstein D."/>
            <person name="Grigoriev I."/>
            <person name="Groza M."/>
            <person name="Hammon N."/>
            <person name="Hawkins T."/>
            <person name="Haydu L."/>
            <person name="Israni S."/>
            <person name="Jett J."/>
            <person name="Kadner K."/>
            <person name="Kimball H."/>
            <person name="Kobayashi A."/>
            <person name="Lopez F."/>
            <person name="Lou Y."/>
            <person name="Martinez D."/>
            <person name="Medina C."/>
            <person name="Morgan J."/>
            <person name="Nandkeshwar R."/>
            <person name="Noonan J.P."/>
            <person name="Pitluck S."/>
            <person name="Pollard M."/>
            <person name="Predki P."/>
            <person name="Priest J."/>
            <person name="Ramirez L."/>
            <person name="Retterer J."/>
            <person name="Rodriguez A."/>
            <person name="Rogers S."/>
            <person name="Salamov A."/>
            <person name="Salazar A."/>
            <person name="Thayer N."/>
            <person name="Tice H."/>
            <person name="Tsai M."/>
            <person name="Ustaszewska A."/>
            <person name="Vo N."/>
            <person name="Wheeler J."/>
            <person name="Wu K."/>
            <person name="Yang J."/>
            <person name="Dickson M."/>
            <person name="Cheng J.-F."/>
            <person name="Eichler E.E."/>
            <person name="Olsen A."/>
            <person name="Pennacchio L.A."/>
            <person name="Rokhsar D.S."/>
            <person name="Richardson P."/>
            <person name="Lucas S.M."/>
            <person name="Myers R.M."/>
            <person name="Rubin E.M."/>
        </authorList>
    </citation>
    <scope>NUCLEOTIDE SEQUENCE [LARGE SCALE GENOMIC DNA]</scope>
</reference>
<reference key="4">
    <citation type="submission" date="2005-09" db="EMBL/GenBank/DDBJ databases">
        <authorList>
            <person name="Mural R.J."/>
            <person name="Istrail S."/>
            <person name="Sutton G.G."/>
            <person name="Florea L."/>
            <person name="Halpern A.L."/>
            <person name="Mobarry C.M."/>
            <person name="Lippert R."/>
            <person name="Walenz B."/>
            <person name="Shatkay H."/>
            <person name="Dew I."/>
            <person name="Miller J.R."/>
            <person name="Flanigan M.J."/>
            <person name="Edwards N.J."/>
            <person name="Bolanos R."/>
            <person name="Fasulo D."/>
            <person name="Halldorsson B.V."/>
            <person name="Hannenhalli S."/>
            <person name="Turner R."/>
            <person name="Yooseph S."/>
            <person name="Lu F."/>
            <person name="Nusskern D.R."/>
            <person name="Shue B.C."/>
            <person name="Zheng X.H."/>
            <person name="Zhong F."/>
            <person name="Delcher A.L."/>
            <person name="Huson D.H."/>
            <person name="Kravitz S.A."/>
            <person name="Mouchard L."/>
            <person name="Reinert K."/>
            <person name="Remington K.A."/>
            <person name="Clark A.G."/>
            <person name="Waterman M.S."/>
            <person name="Eichler E.E."/>
            <person name="Adams M.D."/>
            <person name="Hunkapiller M.W."/>
            <person name="Myers E.W."/>
            <person name="Venter J.C."/>
        </authorList>
    </citation>
    <scope>NUCLEOTIDE SEQUENCE [LARGE SCALE GENOMIC DNA]</scope>
</reference>
<reference key="5">
    <citation type="journal article" date="2004" name="Genome Res.">
        <title>The status, quality, and expansion of the NIH full-length cDNA project: the Mammalian Gene Collection (MGC).</title>
        <authorList>
            <consortium name="The MGC Project Team"/>
        </authorList>
    </citation>
    <scope>NUCLEOTIDE SEQUENCE [LARGE SCALE MRNA] (ISOFORM 2)</scope>
</reference>
<reference key="6">
    <citation type="journal article" date="2013" name="Mol. Cell">
        <title>Parallel SCF adaptor capture proteomics reveals a role for SCFFBXL17 in NRF2 activation via BACH1 repressor turnover.</title>
        <authorList>
            <person name="Tan M.K."/>
            <person name="Lim H.J."/>
            <person name="Bennett E.J."/>
            <person name="Shi Y."/>
            <person name="Harper J.W."/>
        </authorList>
    </citation>
    <scope>FUNCTION</scope>
    <scope>IDENTIFICATION IN THE SCF(FBXL17) COMPLEX</scope>
    <scope>SUBCELLULAR LOCATION</scope>
</reference>
<reference key="7">
    <citation type="journal article" date="2016" name="EMBO J.">
        <title>SCF (Fbxl17) ubiquitylation of Sufu regulates Hedgehog signaling and medulloblastoma development.</title>
        <authorList>
            <person name="Raducu M."/>
            <person name="Fung E."/>
            <person name="Serres S."/>
            <person name="Infante P."/>
            <person name="Barberis A."/>
            <person name="Fischer R."/>
            <person name="Bristow C."/>
            <person name="Thezenas M.L."/>
            <person name="Finta C."/>
            <person name="Christianson J.C."/>
            <person name="Buffa F.M."/>
            <person name="Kessler B.M."/>
            <person name="Sibson N.R."/>
            <person name="Di Marcotullio L."/>
            <person name="Toftgaard R."/>
            <person name="D'Angiolella V."/>
        </authorList>
    </citation>
    <scope>FUNCTION</scope>
    <scope>SUBCELLULAR LOCATION</scope>
    <scope>INTERACTION WITH SUFU</scope>
</reference>
<reference key="8">
    <citation type="journal article" date="2018" name="Science">
        <title>Dimerization quality control ensures neuronal development and survival.</title>
        <authorList>
            <person name="Mena E.L."/>
            <person name="Kjolby R.A.S."/>
            <person name="Saxton R.A."/>
            <person name="Werner A."/>
            <person name="Lew B.G."/>
            <person name="Boyle J.M."/>
            <person name="Harland R."/>
            <person name="Rape M."/>
        </authorList>
    </citation>
    <scope>FUNCTION</scope>
    <scope>VARIANT ARG-627</scope>
    <scope>CHARACTERIZATION OF VARIANT ARG-627</scope>
</reference>
<dbReference type="EMBL" id="AK126722">
    <property type="protein sequence ID" value="BAC86658.1"/>
    <property type="molecule type" value="mRNA"/>
</dbReference>
<dbReference type="EMBL" id="AL133602">
    <property type="protein sequence ID" value="CAB63737.2"/>
    <property type="molecule type" value="mRNA"/>
</dbReference>
<dbReference type="EMBL" id="AC008462">
    <property type="status" value="NOT_ANNOTATED_CDS"/>
    <property type="molecule type" value="Genomic_DNA"/>
</dbReference>
<dbReference type="EMBL" id="AC011419">
    <property type="status" value="NOT_ANNOTATED_CDS"/>
    <property type="molecule type" value="Genomic_DNA"/>
</dbReference>
<dbReference type="EMBL" id="CH471086">
    <property type="protein sequence ID" value="EAW49061.1"/>
    <property type="molecule type" value="Genomic_DNA"/>
</dbReference>
<dbReference type="EMBL" id="BC126144">
    <property type="protein sequence ID" value="AAI26145.1"/>
    <property type="molecule type" value="mRNA"/>
</dbReference>
<dbReference type="EMBL" id="BC126146">
    <property type="protein sequence ID" value="AAI26147.1"/>
    <property type="molecule type" value="mRNA"/>
</dbReference>
<dbReference type="CCDS" id="CCDS54886.1">
    <molecule id="Q9UF56-1"/>
</dbReference>
<dbReference type="PIR" id="T43444">
    <property type="entry name" value="T43444"/>
</dbReference>
<dbReference type="RefSeq" id="NP_001156787.2">
    <molecule id="Q9UF56-1"/>
    <property type="nucleotide sequence ID" value="NM_001163315.3"/>
</dbReference>
<dbReference type="PDB" id="6W66">
    <property type="method" value="X-ray"/>
    <property type="resolution" value="3.21 A"/>
    <property type="chains" value="B=310-701"/>
</dbReference>
<dbReference type="PDB" id="6WCQ">
    <property type="method" value="EM"/>
    <property type="resolution" value="8.50 A"/>
    <property type="chains" value="B=310-701"/>
</dbReference>
<dbReference type="PDB" id="8UAH">
    <property type="method" value="EM"/>
    <property type="resolution" value="3.30 A"/>
    <property type="chains" value="B=310-701"/>
</dbReference>
<dbReference type="PDB" id="8UBT">
    <property type="method" value="EM"/>
    <property type="resolution" value="3.10 A"/>
    <property type="chains" value="C=310-701"/>
</dbReference>
<dbReference type="PDB" id="8UBU">
    <property type="method" value="EM"/>
    <property type="resolution" value="4.60 A"/>
    <property type="chains" value="D/K=310-701"/>
</dbReference>
<dbReference type="PDB" id="8UBV">
    <property type="method" value="EM"/>
    <property type="resolution" value="4.10 A"/>
    <property type="chains" value="B/H=310-701"/>
</dbReference>
<dbReference type="PDBsum" id="6W66"/>
<dbReference type="PDBsum" id="6WCQ"/>
<dbReference type="PDBsum" id="8UAH"/>
<dbReference type="PDBsum" id="8UBT"/>
<dbReference type="PDBsum" id="8UBU"/>
<dbReference type="PDBsum" id="8UBV"/>
<dbReference type="EMDB" id="EMD-21617"/>
<dbReference type="EMDB" id="EMD-42064"/>
<dbReference type="EMDB" id="EMD-42102"/>
<dbReference type="EMDB" id="EMD-42105"/>
<dbReference type="EMDB" id="EMD-42106"/>
<dbReference type="SMR" id="Q9UF56"/>
<dbReference type="BioGRID" id="122315">
    <property type="interactions" value="88"/>
</dbReference>
<dbReference type="ComplexPortal" id="CPX-2773">
    <property type="entry name" value="SCF E3 ubiquitin ligase complex, FBXL17 variant"/>
</dbReference>
<dbReference type="FunCoup" id="Q9UF56">
    <property type="interactions" value="1517"/>
</dbReference>
<dbReference type="IntAct" id="Q9UF56">
    <property type="interactions" value="48"/>
</dbReference>
<dbReference type="STRING" id="9606.ENSP00000437464"/>
<dbReference type="GlyGen" id="Q9UF56">
    <property type="glycosylation" value="3 sites, 1 O-linked glycan (1 site)"/>
</dbReference>
<dbReference type="iPTMnet" id="Q9UF56"/>
<dbReference type="PhosphoSitePlus" id="Q9UF56"/>
<dbReference type="SwissPalm" id="Q9UF56"/>
<dbReference type="BioMuta" id="FBXL17"/>
<dbReference type="DMDM" id="229462981"/>
<dbReference type="jPOST" id="Q9UF56"/>
<dbReference type="MassIVE" id="Q9UF56"/>
<dbReference type="PaxDb" id="9606-ENSP00000437464"/>
<dbReference type="PeptideAtlas" id="Q9UF56"/>
<dbReference type="ProteomicsDB" id="84171">
    <molecule id="Q9UF56-1"/>
</dbReference>
<dbReference type="ProteomicsDB" id="84172">
    <molecule id="Q9UF56-2"/>
</dbReference>
<dbReference type="ProteomicsDB" id="84173">
    <molecule id="Q9UF56-3"/>
</dbReference>
<dbReference type="Pumba" id="Q9UF56"/>
<dbReference type="Antibodypedia" id="25280">
    <property type="antibodies" value="121 antibodies from 17 providers"/>
</dbReference>
<dbReference type="DNASU" id="64839"/>
<dbReference type="Ensembl" id="ENST00000542267.7">
    <molecule id="Q9UF56-1"/>
    <property type="protein sequence ID" value="ENSP00000437464.2"/>
    <property type="gene ID" value="ENSG00000145743.18"/>
</dbReference>
<dbReference type="GeneID" id="64839"/>
<dbReference type="KEGG" id="hsa:64839"/>
<dbReference type="MANE-Select" id="ENST00000542267.7">
    <property type="protein sequence ID" value="ENSP00000437464.2"/>
    <property type="RefSeq nucleotide sequence ID" value="NM_001163315.3"/>
    <property type="RefSeq protein sequence ID" value="NP_001156787.2"/>
</dbReference>
<dbReference type="UCSC" id="uc003kon.5">
    <molecule id="Q9UF56-1"/>
    <property type="organism name" value="human"/>
</dbReference>
<dbReference type="AGR" id="HGNC:13615"/>
<dbReference type="CTD" id="64839"/>
<dbReference type="DisGeNET" id="64839"/>
<dbReference type="GeneCards" id="FBXL17"/>
<dbReference type="HGNC" id="HGNC:13615">
    <property type="gene designation" value="FBXL17"/>
</dbReference>
<dbReference type="HPA" id="ENSG00000145743">
    <property type="expression patterns" value="Tissue enhanced (skeletal)"/>
</dbReference>
<dbReference type="MIM" id="609083">
    <property type="type" value="gene"/>
</dbReference>
<dbReference type="neXtProt" id="NX_Q9UF56"/>
<dbReference type="OpenTargets" id="ENSG00000145743"/>
<dbReference type="PharmGKB" id="PA134920563"/>
<dbReference type="VEuPathDB" id="HostDB:ENSG00000145743"/>
<dbReference type="eggNOG" id="KOG1947">
    <property type="taxonomic scope" value="Eukaryota"/>
</dbReference>
<dbReference type="GeneTree" id="ENSGT00940000156973"/>
<dbReference type="HOGENOM" id="CLU_024577_3_0_1"/>
<dbReference type="InParanoid" id="Q9UF56"/>
<dbReference type="OMA" id="MGWIPSM"/>
<dbReference type="OrthoDB" id="550575at2759"/>
<dbReference type="PAN-GO" id="Q9UF56">
    <property type="GO annotations" value="7 GO annotations based on evolutionary models"/>
</dbReference>
<dbReference type="PhylomeDB" id="Q9UF56"/>
<dbReference type="TreeFam" id="TF332421"/>
<dbReference type="PathwayCommons" id="Q9UF56"/>
<dbReference type="Reactome" id="R-HSA-9708530">
    <property type="pathway name" value="Regulation of BACH1 activity"/>
</dbReference>
<dbReference type="SignaLink" id="Q9UF56"/>
<dbReference type="SIGNOR" id="Q9UF56"/>
<dbReference type="BioGRID-ORCS" id="64839">
    <property type="hits" value="21 hits in 1166 CRISPR screens"/>
</dbReference>
<dbReference type="ChiTaRS" id="FBXL17">
    <property type="organism name" value="human"/>
</dbReference>
<dbReference type="GenomeRNAi" id="64839"/>
<dbReference type="Pharos" id="Q9UF56">
    <property type="development level" value="Tbio"/>
</dbReference>
<dbReference type="PRO" id="PR:Q9UF56"/>
<dbReference type="Proteomes" id="UP000005640">
    <property type="component" value="Chromosome 5"/>
</dbReference>
<dbReference type="RNAct" id="Q9UF56">
    <property type="molecule type" value="protein"/>
</dbReference>
<dbReference type="Bgee" id="ENSG00000145743">
    <property type="expression patterns" value="Expressed in left ventricle myocardium and 201 other cell types or tissues"/>
</dbReference>
<dbReference type="ExpressionAtlas" id="Q9UF56">
    <property type="expression patterns" value="baseline and differential"/>
</dbReference>
<dbReference type="GO" id="GO:0005737">
    <property type="term" value="C:cytoplasm"/>
    <property type="evidence" value="ECO:0000314"/>
    <property type="project" value="UniProtKB"/>
</dbReference>
<dbReference type="GO" id="GO:0005654">
    <property type="term" value="C:nucleoplasm"/>
    <property type="evidence" value="ECO:0000314"/>
    <property type="project" value="HPA"/>
</dbReference>
<dbReference type="GO" id="GO:0005634">
    <property type="term" value="C:nucleus"/>
    <property type="evidence" value="ECO:0000314"/>
    <property type="project" value="UniProtKB"/>
</dbReference>
<dbReference type="GO" id="GO:0019005">
    <property type="term" value="C:SCF ubiquitin ligase complex"/>
    <property type="evidence" value="ECO:0000314"/>
    <property type="project" value="UniProtKB"/>
</dbReference>
<dbReference type="GO" id="GO:0007399">
    <property type="term" value="P:nervous system development"/>
    <property type="evidence" value="ECO:0000250"/>
    <property type="project" value="UniProtKB"/>
</dbReference>
<dbReference type="GO" id="GO:0014033">
    <property type="term" value="P:neural crest cell differentiation"/>
    <property type="evidence" value="ECO:0000250"/>
    <property type="project" value="UniProtKB"/>
</dbReference>
<dbReference type="GO" id="GO:0043161">
    <property type="term" value="P:proteasome-mediated ubiquitin-dependent protein catabolic process"/>
    <property type="evidence" value="ECO:0000314"/>
    <property type="project" value="UniProtKB"/>
</dbReference>
<dbReference type="GO" id="GO:0000209">
    <property type="term" value="P:protein polyubiquitination"/>
    <property type="evidence" value="ECO:0000314"/>
    <property type="project" value="UniProtKB"/>
</dbReference>
<dbReference type="GO" id="GO:0006515">
    <property type="term" value="P:protein quality control for misfolded or incompletely synthesized proteins"/>
    <property type="evidence" value="ECO:0000314"/>
    <property type="project" value="UniProtKB"/>
</dbReference>
<dbReference type="GO" id="GO:0016567">
    <property type="term" value="P:protein ubiquitination"/>
    <property type="evidence" value="ECO:0000314"/>
    <property type="project" value="UniProtKB"/>
</dbReference>
<dbReference type="GO" id="GO:0008589">
    <property type="term" value="P:regulation of smoothened signaling pathway"/>
    <property type="evidence" value="ECO:0000315"/>
    <property type="project" value="UniProtKB"/>
</dbReference>
<dbReference type="GO" id="GO:0031146">
    <property type="term" value="P:SCF-dependent proteasomal ubiquitin-dependent protein catabolic process"/>
    <property type="evidence" value="ECO:0000314"/>
    <property type="project" value="UniProtKB"/>
</dbReference>
<dbReference type="CDD" id="cd22092">
    <property type="entry name" value="F-box_FBXO13"/>
    <property type="match status" value="1"/>
</dbReference>
<dbReference type="FunFam" id="3.80.10.10:FF:000161">
    <property type="entry name" value="F-box/LRR-repeat protein 17 isoform X1"/>
    <property type="match status" value="1"/>
</dbReference>
<dbReference type="FunFam" id="3.80.10.10:FF:000358">
    <property type="entry name" value="F-box/LRR-repeat protein 17 isoform X1"/>
    <property type="match status" value="1"/>
</dbReference>
<dbReference type="Gene3D" id="3.80.10.10">
    <property type="entry name" value="Ribonuclease Inhibitor"/>
    <property type="match status" value="2"/>
</dbReference>
<dbReference type="InterPro" id="IPR036047">
    <property type="entry name" value="F-box-like_dom_sf"/>
</dbReference>
<dbReference type="InterPro" id="IPR001810">
    <property type="entry name" value="F-box_dom"/>
</dbReference>
<dbReference type="InterPro" id="IPR050648">
    <property type="entry name" value="F-box_LRR-repeat"/>
</dbReference>
<dbReference type="InterPro" id="IPR001611">
    <property type="entry name" value="Leu-rich_rpt"/>
</dbReference>
<dbReference type="InterPro" id="IPR006553">
    <property type="entry name" value="Leu-rich_rpt_Cys-con_subtyp"/>
</dbReference>
<dbReference type="InterPro" id="IPR032675">
    <property type="entry name" value="LRR_dom_sf"/>
</dbReference>
<dbReference type="PANTHER" id="PTHR13382:SF72">
    <property type="entry name" value="F-BOX AND LEUCINE-RICH REPEAT PROTEIN 17"/>
    <property type="match status" value="1"/>
</dbReference>
<dbReference type="PANTHER" id="PTHR13382">
    <property type="entry name" value="MITOCHONDRIAL ATP SYNTHASE COUPLING FACTOR B"/>
    <property type="match status" value="1"/>
</dbReference>
<dbReference type="Pfam" id="PF12937">
    <property type="entry name" value="F-box-like"/>
    <property type="match status" value="1"/>
</dbReference>
<dbReference type="Pfam" id="PF13516">
    <property type="entry name" value="LRR_6"/>
    <property type="match status" value="1"/>
</dbReference>
<dbReference type="SMART" id="SM00256">
    <property type="entry name" value="FBOX"/>
    <property type="match status" value="1"/>
</dbReference>
<dbReference type="SMART" id="SM00367">
    <property type="entry name" value="LRR_CC"/>
    <property type="match status" value="11"/>
</dbReference>
<dbReference type="SUPFAM" id="SSF81383">
    <property type="entry name" value="F-box domain"/>
    <property type="match status" value="1"/>
</dbReference>
<dbReference type="SUPFAM" id="SSF52047">
    <property type="entry name" value="RNI-like"/>
    <property type="match status" value="1"/>
</dbReference>
<dbReference type="PROSITE" id="PS50181">
    <property type="entry name" value="FBOX"/>
    <property type="match status" value="1"/>
</dbReference>
<comment type="function">
    <text evidence="1 2 5 6 7">Substrate-recognition component of the SCF(FBXL17) E3 ubiquitin ligase complex, a key component of a quality control pathway required to ensure functional dimerization of BTB domain-containing proteins (dimerization quality control, DQC) (PubMed:30190310). FBXL17 specifically recognizes and binds a conserved degron of non-consecutive residues present at the interface of BTB dimers of aberrant composition: aberrant BTB dimer are then ubiquitinated by the SCF(FBXL17) complex and degraded by the proteasome (PubMed:30190310). The ability of the SCF(FBXL17) complex to eliminate compromised BTB dimers is required for the differentiation and survival of neural crest and neuronal cells (By similarity). The SCF(FBXL17) complex mediates ubiquitination and degradation of BACH1 (PubMed:24035498, PubMed:30190310). The SCF(FBXL17) complex is also involved in the regulation of the hedgehog/smoothened (Hh) signaling pathway by mediating the ubiquitination and degradation of SUFU, allowing the release of GLI1 from SUFU for proper Hh signal transduction (PubMed:27234298). The SCF(FBXL17) complex mediates ubiquitination and degradation of PRMT1 (By similarity).</text>
</comment>
<comment type="subunit">
    <text evidence="2 5 6 7">Part of the SCF (SKP1-CUL1-F-box) E3 ubiquitin-protein ligase complex SCF(FBXL17) composed of CUL1, SKP1, RBX1 and FBXL17 (PubMed:24035498). Interacts with BTB domain-containing proteins such as KLHL12, BCL6 and BACH1; specifically recognizes and binds a conserved degron of non-consecutive residues present at the interface of BTB dimers of aberrant composition (PubMed:30190310). Interacts with SUFU (PubMed:27234298). Interacts with PRMT1 (By similarity).</text>
</comment>
<comment type="interaction">
    <interactant intactId="EBI-8835653">
        <id>Q9UF56</id>
    </interactant>
    <interactant intactId="EBI-21328977">
        <id>Q8NFY9</id>
        <label>KBTBD8</label>
    </interactant>
    <organismsDiffer>false</organismsDiffer>
    <experiments>3</experiments>
</comment>
<comment type="interaction">
    <interactant intactId="EBI-8835653">
        <id>Q9UF56</id>
    </interactant>
    <interactant intactId="EBI-740929">
        <id>Q53G59</id>
        <label>KLHL12</label>
    </interactant>
    <organismsDiffer>false</organismsDiffer>
    <experiments>11</experiments>
</comment>
<comment type="interaction">
    <interactant intactId="EBI-8835653">
        <id>Q9UF56</id>
    </interactant>
    <interactant intactId="EBI-307486">
        <id>P63208</id>
        <label>SKP1</label>
    </interactant>
    <organismsDiffer>false</organismsDiffer>
    <experiments>16</experiments>
</comment>
<comment type="interaction">
    <interactant intactId="EBI-8835653">
        <id>Q9UF56</id>
    </interactant>
    <interactant intactId="EBI-1222832">
        <id>Q9UBP0</id>
        <label>SPAST</label>
    </interactant>
    <organismsDiffer>false</organismsDiffer>
    <experiments>3</experiments>
</comment>
<comment type="interaction">
    <interactant intactId="EBI-8835653">
        <id>Q9UF56</id>
    </interactant>
    <interactant intactId="EBI-36485974">
        <id>Q9UBP0-1</id>
        <label>SPAST</label>
    </interactant>
    <organismsDiffer>false</organismsDiffer>
    <experiments>4</experiments>
</comment>
<comment type="subcellular location">
    <subcellularLocation>
        <location evidence="5">Cytoplasm</location>
    </subcellularLocation>
    <subcellularLocation>
        <location evidence="5 6">Nucleus</location>
    </subcellularLocation>
    <text evidence="5">Present in the cytoplasm and nucleus; more abundant in the cytoplasm.</text>
</comment>
<comment type="alternative products">
    <event type="alternative splicing"/>
    <isoform>
        <id>Q9UF56-1</id>
        <name>1</name>
        <sequence type="displayed"/>
    </isoform>
    <isoform>
        <id>Q9UF56-3</id>
        <name>2</name>
        <sequence type="described" ref="VSP_037034"/>
    </isoform>
    <isoform>
        <id>Q9UF56-2</id>
        <name>3</name>
        <sequence type="described" ref="VSP_037034 VSP_009476"/>
    </isoform>
</comment>
<comment type="similarity">
    <text evidence="12">Belongs to the FBXL17 family.</text>
</comment>
<accession>Q9UF56</accession>
<accession>A1A4E3</accession>
<proteinExistence type="evidence at protein level"/>
<feature type="chain" id="PRO_0000119865" description="F-box/LRR-repeat protein 17">
    <location>
        <begin position="1"/>
        <end position="701"/>
    </location>
</feature>
<feature type="domain" description="F-box" evidence="3">
    <location>
        <begin position="318"/>
        <end position="365"/>
    </location>
</feature>
<feature type="region of interest" description="Disordered" evidence="4">
    <location>
        <begin position="1"/>
        <end position="20"/>
    </location>
</feature>
<feature type="region of interest" description="Disordered" evidence="4">
    <location>
        <begin position="72"/>
        <end position="94"/>
    </location>
</feature>
<feature type="region of interest" description="Disordered" evidence="4">
    <location>
        <begin position="227"/>
        <end position="300"/>
    </location>
</feature>
<feature type="compositionally biased region" description="Basic and acidic residues" evidence="4">
    <location>
        <begin position="1"/>
        <end position="11"/>
    </location>
</feature>
<feature type="compositionally biased region" description="Gly residues" evidence="4">
    <location>
        <begin position="227"/>
        <end position="237"/>
    </location>
</feature>
<feature type="compositionally biased region" description="Pro residues" evidence="4">
    <location>
        <begin position="252"/>
        <end position="264"/>
    </location>
</feature>
<feature type="splice variant" id="VSP_037034" description="In isoform 2 and isoform 3." evidence="8 9 10">
    <location>
        <begin position="1"/>
        <end position="398"/>
    </location>
</feature>
<feature type="splice variant" id="VSP_009476" description="In isoform 3." evidence="10">
    <original>NEVTVEQLVQQYPHITFSTVLQDCKRTLERAYQMGWTPNMSAASS</original>
    <variation>RVDYQVVCFLHISIVNSLMSYPLSFSISTPVYYILYIHFICIYAIIAMHCLPAFVN</variation>
    <location>
        <begin position="657"/>
        <end position="701"/>
    </location>
</feature>
<feature type="sequence variant" id="VAR_081000" description="Impaired ability to bind substrate proteins." evidence="7">
    <original>C</original>
    <variation>R</variation>
    <location>
        <position position="627"/>
    </location>
</feature>
<feature type="helix" evidence="15">
    <location>
        <begin position="321"/>
        <end position="323"/>
    </location>
</feature>
<feature type="helix" evidence="15">
    <location>
        <begin position="326"/>
        <end position="333"/>
    </location>
</feature>
<feature type="helix" evidence="15">
    <location>
        <begin position="338"/>
        <end position="342"/>
    </location>
</feature>
<feature type="helix" evidence="15">
    <location>
        <begin position="345"/>
        <end position="347"/>
    </location>
</feature>
<feature type="helix" evidence="15">
    <location>
        <begin position="350"/>
        <end position="356"/>
    </location>
</feature>
<feature type="turn" evidence="15">
    <location>
        <begin position="359"/>
        <end position="361"/>
    </location>
</feature>
<feature type="strand" evidence="14">
    <location>
        <begin position="364"/>
        <end position="366"/>
    </location>
</feature>
<feature type="turn" evidence="15">
    <location>
        <begin position="371"/>
        <end position="373"/>
    </location>
</feature>
<feature type="helix" evidence="15">
    <location>
        <begin position="378"/>
        <end position="384"/>
    </location>
</feature>
<feature type="strand" evidence="14">
    <location>
        <begin position="389"/>
        <end position="392"/>
    </location>
</feature>
<feature type="helix" evidence="15">
    <location>
        <begin position="401"/>
        <end position="403"/>
    </location>
</feature>
<feature type="helix" evidence="15">
    <location>
        <begin position="407"/>
        <end position="410"/>
    </location>
</feature>
<feature type="strand" evidence="15">
    <location>
        <begin position="416"/>
        <end position="418"/>
    </location>
</feature>
<feature type="helix" evidence="15">
    <location>
        <begin position="427"/>
        <end position="436"/>
    </location>
</feature>
<feature type="strand" evidence="15">
    <location>
        <begin position="442"/>
        <end position="444"/>
    </location>
</feature>
<feature type="helix" evidence="15">
    <location>
        <begin position="453"/>
        <end position="462"/>
    </location>
</feature>
<feature type="strand" evidence="15">
    <location>
        <begin position="468"/>
        <end position="470"/>
    </location>
</feature>
<feature type="helix" evidence="15">
    <location>
        <begin position="479"/>
        <end position="487"/>
    </location>
</feature>
<feature type="strand" evidence="15">
    <location>
        <begin position="494"/>
        <end position="497"/>
    </location>
</feature>
<feature type="helix" evidence="15">
    <location>
        <begin position="505"/>
        <end position="511"/>
    </location>
</feature>
<feature type="strand" evidence="15">
    <location>
        <begin position="520"/>
        <end position="523"/>
    </location>
</feature>
<feature type="helix" evidence="15">
    <location>
        <begin position="530"/>
        <end position="533"/>
    </location>
</feature>
<feature type="turn" evidence="15">
    <location>
        <begin position="534"/>
        <end position="538"/>
    </location>
</feature>
<feature type="strand" evidence="15">
    <location>
        <begin position="544"/>
        <end position="546"/>
    </location>
</feature>
<feature type="helix" evidence="15">
    <location>
        <begin position="556"/>
        <end position="562"/>
    </location>
</feature>
<feature type="strand" evidence="14">
    <location>
        <begin position="570"/>
        <end position="572"/>
    </location>
</feature>
<feature type="helix" evidence="15">
    <location>
        <begin position="581"/>
        <end position="590"/>
    </location>
</feature>
<feature type="strand" evidence="14">
    <location>
        <begin position="596"/>
        <end position="598"/>
    </location>
</feature>
<feature type="helix" evidence="15">
    <location>
        <begin position="608"/>
        <end position="615"/>
    </location>
</feature>
<feature type="strand" evidence="14">
    <location>
        <begin position="621"/>
        <end position="623"/>
    </location>
</feature>
<feature type="turn" evidence="15">
    <location>
        <begin position="632"/>
        <end position="634"/>
    </location>
</feature>
<feature type="helix" evidence="15">
    <location>
        <begin position="635"/>
        <end position="641"/>
    </location>
</feature>
<feature type="strand" evidence="15">
    <location>
        <begin position="646"/>
        <end position="648"/>
    </location>
</feature>
<feature type="helix" evidence="15">
    <location>
        <begin position="660"/>
        <end position="667"/>
    </location>
</feature>
<feature type="strand" evidence="14">
    <location>
        <begin position="672"/>
        <end position="674"/>
    </location>
</feature>
<feature type="turn" evidence="15">
    <location>
        <begin position="676"/>
        <end position="681"/>
    </location>
</feature>
<feature type="helix" evidence="15">
    <location>
        <begin position="682"/>
        <end position="687"/>
    </location>
</feature>
<sequence>MGHLLSKEPRNRPSQKRPRCCSWCRRRRPLLRLPRRTPAKVPPQPAAPRSRDCFFRGPCMLCFIVHSPGAPAPAGPEEEPPLSPPPRDGAYAAASSSQHLARRYAALAAEDCAAAARRFLLSSAAAAAAAAASASSPASCCKELGLAAAAAWEQQGRSLFLASLGPVRFLGPPAAVQLFRGPTPSPAELPTPPEMVCKRKGAGVPACTPCKQPRCGGGGCGGGGGGGGGGGPAGGGASPPRPPDAGCCQAPEQPPQPLCPPPSSPTSEGAPTEAGGDAVRAGGTAPLSAQQQHECGDADCRESPENPCDCHREPPPETPDINQLPPSILLKIFSNLSLDERCLSASLVCKYWRDLCLDFQFWKQLDLSSRQQVTDELLEKIASRSQNIIEINISDCRSMSDNGVCVLAFKCPGLLRYTAYRCKQLSDTSIIAVASHCPLLQKVHVGNQDKLTDEGLKQLGSKCRELKDIHFGQCYKISDEGMIVIAKGCLKLQRIYMQENKLVTDQSVKAFAEHCPELQYVGFMGCSVTSKGVIHLTKLRNLSSLDLRHITELDNETVMEIVKRCKNLSSLNLCLNWIINDRCVEVIAKEGQNLKELYLVSCKITDYALIAIGRYSMTIETVDVGWCKEITDQGATLIAQSSKSLRYLGLMRCDKVNEVTVEQLVQQYPHITFSTVLQDCKRTLERAYQMGWTPNMSAASS</sequence>
<name>FXL17_HUMAN</name>
<evidence type="ECO:0000250" key="1">
    <source>
        <dbReference type="UniProtKB" id="B1H1X1"/>
    </source>
</evidence>
<evidence type="ECO:0000250" key="2">
    <source>
        <dbReference type="UniProtKB" id="Q9QZN1"/>
    </source>
</evidence>
<evidence type="ECO:0000255" key="3">
    <source>
        <dbReference type="PROSITE-ProRule" id="PRU00080"/>
    </source>
</evidence>
<evidence type="ECO:0000256" key="4">
    <source>
        <dbReference type="SAM" id="MobiDB-lite"/>
    </source>
</evidence>
<evidence type="ECO:0000269" key="5">
    <source>
    </source>
</evidence>
<evidence type="ECO:0000269" key="6">
    <source>
    </source>
</evidence>
<evidence type="ECO:0000269" key="7">
    <source>
    </source>
</evidence>
<evidence type="ECO:0000303" key="8">
    <source>
    </source>
</evidence>
<evidence type="ECO:0000303" key="9">
    <source>
    </source>
</evidence>
<evidence type="ECO:0000303" key="10">
    <source>
    </source>
</evidence>
<evidence type="ECO:0000303" key="11">
    <source>
    </source>
</evidence>
<evidence type="ECO:0000305" key="12"/>
<evidence type="ECO:0000312" key="13">
    <source>
        <dbReference type="HGNC" id="HGNC:13615"/>
    </source>
</evidence>
<evidence type="ECO:0007829" key="14">
    <source>
        <dbReference type="PDB" id="6W66"/>
    </source>
</evidence>
<evidence type="ECO:0007829" key="15">
    <source>
        <dbReference type="PDB" id="8UBT"/>
    </source>
</evidence>
<organism>
    <name type="scientific">Homo sapiens</name>
    <name type="common">Human</name>
    <dbReference type="NCBI Taxonomy" id="9606"/>
    <lineage>
        <taxon>Eukaryota</taxon>
        <taxon>Metazoa</taxon>
        <taxon>Chordata</taxon>
        <taxon>Craniata</taxon>
        <taxon>Vertebrata</taxon>
        <taxon>Euteleostomi</taxon>
        <taxon>Mammalia</taxon>
        <taxon>Eutheria</taxon>
        <taxon>Euarchontoglires</taxon>
        <taxon>Primates</taxon>
        <taxon>Haplorrhini</taxon>
        <taxon>Catarrhini</taxon>
        <taxon>Hominidae</taxon>
        <taxon>Homo</taxon>
    </lineage>
</organism>
<gene>
    <name evidence="11 13" type="primary">FBXL17</name>
    <name evidence="13" type="synonym">FBL17</name>
    <name evidence="2" type="synonym">FBX13</name>
    <name evidence="13" type="synonym">FBXO13</name>
</gene>
<protein>
    <recommendedName>
        <fullName evidence="11">F-box/LRR-repeat protein 17</fullName>
    </recommendedName>
    <alternativeName>
        <fullName evidence="12">F-box and leucine-rich repeat protein 17</fullName>
    </alternativeName>
    <alternativeName>
        <fullName evidence="2">F-box only protein 13</fullName>
    </alternativeName>
</protein>
<keyword id="KW-0002">3D-structure</keyword>
<keyword id="KW-0025">Alternative splicing</keyword>
<keyword id="KW-0963">Cytoplasm</keyword>
<keyword id="KW-0524">Neurogenesis</keyword>
<keyword id="KW-0539">Nucleus</keyword>
<keyword id="KW-1267">Proteomics identification</keyword>
<keyword id="KW-1185">Reference proteome</keyword>
<keyword id="KW-0833">Ubl conjugation pathway</keyword>